<proteinExistence type="inferred from homology"/>
<feature type="chain" id="PRO_0000091447" description="Elongation factor Tu, chloroplastic">
    <location>
        <begin position="1"/>
        <end position="408"/>
    </location>
</feature>
<feature type="domain" description="tr-type G">
    <location>
        <begin position="10"/>
        <end position="214"/>
    </location>
</feature>
<feature type="region of interest" description="G1" evidence="1">
    <location>
        <begin position="19"/>
        <end position="26"/>
    </location>
</feature>
<feature type="region of interest" description="G2" evidence="1">
    <location>
        <begin position="60"/>
        <end position="64"/>
    </location>
</feature>
<feature type="region of interest" description="G3" evidence="1">
    <location>
        <begin position="81"/>
        <end position="84"/>
    </location>
</feature>
<feature type="region of interest" description="G4" evidence="1">
    <location>
        <begin position="136"/>
        <end position="139"/>
    </location>
</feature>
<feature type="region of interest" description="G5" evidence="1">
    <location>
        <begin position="174"/>
        <end position="176"/>
    </location>
</feature>
<feature type="binding site" evidence="1">
    <location>
        <begin position="19"/>
        <end position="26"/>
    </location>
    <ligand>
        <name>GTP</name>
        <dbReference type="ChEBI" id="CHEBI:37565"/>
    </ligand>
</feature>
<feature type="binding site" evidence="2">
    <location>
        <position position="26"/>
    </location>
    <ligand>
        <name>Mg(2+)</name>
        <dbReference type="ChEBI" id="CHEBI:18420"/>
    </ligand>
</feature>
<feature type="binding site" evidence="1">
    <location>
        <begin position="81"/>
        <end position="85"/>
    </location>
    <ligand>
        <name>GTP</name>
        <dbReference type="ChEBI" id="CHEBI:37565"/>
    </ligand>
</feature>
<feature type="binding site" evidence="1">
    <location>
        <begin position="136"/>
        <end position="139"/>
    </location>
    <ligand>
        <name>GTP</name>
        <dbReference type="ChEBI" id="CHEBI:37565"/>
    </ligand>
</feature>
<organism>
    <name type="scientific">Chara connivens</name>
    <name type="common">Convergent stonewort</name>
    <dbReference type="NCBI Taxonomy" id="13779"/>
    <lineage>
        <taxon>Eukaryota</taxon>
        <taxon>Viridiplantae</taxon>
        <taxon>Streptophyta</taxon>
        <taxon>Charophyceae</taxon>
        <taxon>Charales</taxon>
        <taxon>Characeae</taxon>
        <taxon>Chara</taxon>
    </lineage>
</organism>
<dbReference type="EC" id="3.6.5.3" evidence="2"/>
<dbReference type="EMBL" id="U09425">
    <property type="protein sequence ID" value="AAA87685.1"/>
    <property type="molecule type" value="Genomic_DNA"/>
</dbReference>
<dbReference type="PIR" id="S62725">
    <property type="entry name" value="S62725"/>
</dbReference>
<dbReference type="SMR" id="P50371"/>
<dbReference type="GO" id="GO:0009507">
    <property type="term" value="C:chloroplast"/>
    <property type="evidence" value="ECO:0007669"/>
    <property type="project" value="UniProtKB-SubCell"/>
</dbReference>
<dbReference type="GO" id="GO:0005739">
    <property type="term" value="C:mitochondrion"/>
    <property type="evidence" value="ECO:0007669"/>
    <property type="project" value="TreeGrafter"/>
</dbReference>
<dbReference type="GO" id="GO:0005525">
    <property type="term" value="F:GTP binding"/>
    <property type="evidence" value="ECO:0007669"/>
    <property type="project" value="UniProtKB-UniRule"/>
</dbReference>
<dbReference type="GO" id="GO:0003924">
    <property type="term" value="F:GTPase activity"/>
    <property type="evidence" value="ECO:0007669"/>
    <property type="project" value="InterPro"/>
</dbReference>
<dbReference type="GO" id="GO:0003746">
    <property type="term" value="F:translation elongation factor activity"/>
    <property type="evidence" value="ECO:0007669"/>
    <property type="project" value="UniProtKB-UniRule"/>
</dbReference>
<dbReference type="GO" id="GO:0070125">
    <property type="term" value="P:mitochondrial translational elongation"/>
    <property type="evidence" value="ECO:0007669"/>
    <property type="project" value="TreeGrafter"/>
</dbReference>
<dbReference type="CDD" id="cd01884">
    <property type="entry name" value="EF_Tu"/>
    <property type="match status" value="1"/>
</dbReference>
<dbReference type="CDD" id="cd03697">
    <property type="entry name" value="EFTU_II"/>
    <property type="match status" value="1"/>
</dbReference>
<dbReference type="CDD" id="cd03707">
    <property type="entry name" value="EFTU_III"/>
    <property type="match status" value="1"/>
</dbReference>
<dbReference type="FunFam" id="2.40.30.10:FF:000001">
    <property type="entry name" value="Elongation factor Tu"/>
    <property type="match status" value="1"/>
</dbReference>
<dbReference type="FunFam" id="3.40.50.300:FF:000003">
    <property type="entry name" value="Elongation factor Tu"/>
    <property type="match status" value="1"/>
</dbReference>
<dbReference type="Gene3D" id="3.40.50.300">
    <property type="entry name" value="P-loop containing nucleotide triphosphate hydrolases"/>
    <property type="match status" value="1"/>
</dbReference>
<dbReference type="Gene3D" id="2.40.30.10">
    <property type="entry name" value="Translation factors"/>
    <property type="match status" value="2"/>
</dbReference>
<dbReference type="HAMAP" id="MF_00118_B">
    <property type="entry name" value="EF_Tu_B"/>
    <property type="match status" value="1"/>
</dbReference>
<dbReference type="InterPro" id="IPR041709">
    <property type="entry name" value="EF-Tu_GTP-bd"/>
</dbReference>
<dbReference type="InterPro" id="IPR050055">
    <property type="entry name" value="EF-Tu_GTPase"/>
</dbReference>
<dbReference type="InterPro" id="IPR004161">
    <property type="entry name" value="EFTu-like_2"/>
</dbReference>
<dbReference type="InterPro" id="IPR033720">
    <property type="entry name" value="EFTU_2"/>
</dbReference>
<dbReference type="InterPro" id="IPR031157">
    <property type="entry name" value="G_TR_CS"/>
</dbReference>
<dbReference type="InterPro" id="IPR027417">
    <property type="entry name" value="P-loop_NTPase"/>
</dbReference>
<dbReference type="InterPro" id="IPR005225">
    <property type="entry name" value="Small_GTP-bd"/>
</dbReference>
<dbReference type="InterPro" id="IPR000795">
    <property type="entry name" value="T_Tr_GTP-bd_dom"/>
</dbReference>
<dbReference type="InterPro" id="IPR009000">
    <property type="entry name" value="Transl_B-barrel_sf"/>
</dbReference>
<dbReference type="InterPro" id="IPR009001">
    <property type="entry name" value="Transl_elong_EF1A/Init_IF2_C"/>
</dbReference>
<dbReference type="InterPro" id="IPR004541">
    <property type="entry name" value="Transl_elong_EFTu/EF1A_bac/org"/>
</dbReference>
<dbReference type="InterPro" id="IPR004160">
    <property type="entry name" value="Transl_elong_EFTu/EF1A_C"/>
</dbReference>
<dbReference type="NCBIfam" id="TIGR00485">
    <property type="entry name" value="EF-Tu"/>
    <property type="match status" value="1"/>
</dbReference>
<dbReference type="NCBIfam" id="NF000766">
    <property type="entry name" value="PRK00049.1"/>
    <property type="match status" value="1"/>
</dbReference>
<dbReference type="NCBIfam" id="NF009372">
    <property type="entry name" value="PRK12735.1"/>
    <property type="match status" value="1"/>
</dbReference>
<dbReference type="NCBIfam" id="NF009373">
    <property type="entry name" value="PRK12736.1"/>
    <property type="match status" value="1"/>
</dbReference>
<dbReference type="NCBIfam" id="TIGR00231">
    <property type="entry name" value="small_GTP"/>
    <property type="match status" value="1"/>
</dbReference>
<dbReference type="PANTHER" id="PTHR43721:SF5">
    <property type="entry name" value="ELONGATION FACTOR TU, CHLOROPLASTIC"/>
    <property type="match status" value="1"/>
</dbReference>
<dbReference type="PANTHER" id="PTHR43721">
    <property type="entry name" value="ELONGATION FACTOR TU-RELATED"/>
    <property type="match status" value="1"/>
</dbReference>
<dbReference type="Pfam" id="PF00009">
    <property type="entry name" value="GTP_EFTU"/>
    <property type="match status" value="1"/>
</dbReference>
<dbReference type="Pfam" id="PF03144">
    <property type="entry name" value="GTP_EFTU_D2"/>
    <property type="match status" value="1"/>
</dbReference>
<dbReference type="Pfam" id="PF03143">
    <property type="entry name" value="GTP_EFTU_D3"/>
    <property type="match status" value="1"/>
</dbReference>
<dbReference type="PRINTS" id="PR00315">
    <property type="entry name" value="ELONGATNFCT"/>
</dbReference>
<dbReference type="SUPFAM" id="SSF50465">
    <property type="entry name" value="EF-Tu/eEF-1alpha/eIF2-gamma C-terminal domain"/>
    <property type="match status" value="1"/>
</dbReference>
<dbReference type="SUPFAM" id="SSF52540">
    <property type="entry name" value="P-loop containing nucleoside triphosphate hydrolases"/>
    <property type="match status" value="1"/>
</dbReference>
<dbReference type="SUPFAM" id="SSF50447">
    <property type="entry name" value="Translation proteins"/>
    <property type="match status" value="1"/>
</dbReference>
<dbReference type="PROSITE" id="PS00301">
    <property type="entry name" value="G_TR_1"/>
    <property type="match status" value="1"/>
</dbReference>
<dbReference type="PROSITE" id="PS51722">
    <property type="entry name" value="G_TR_2"/>
    <property type="match status" value="1"/>
</dbReference>
<name>EFTU_CHACO</name>
<geneLocation type="chloroplast"/>
<evidence type="ECO:0000250" key="1"/>
<evidence type="ECO:0000255" key="2">
    <source>
        <dbReference type="HAMAP-Rule" id="MF_00118"/>
    </source>
</evidence>
<evidence type="ECO:0000305" key="3"/>
<reference key="1">
    <citation type="journal article" date="1995" name="Mol. Phylogenet. Evol.">
        <title>Phylogenetic analysis of tufA sequences indicates a cyanobacterial origin of all plastids.</title>
        <authorList>
            <person name="Delwiche C.F."/>
            <person name="Kuhsel M."/>
            <person name="Palmer J.D."/>
        </authorList>
    </citation>
    <scope>NUCLEOTIDE SEQUENCE [GENOMIC DNA]</scope>
</reference>
<comment type="function">
    <text evidence="2">GTP hydrolase that promotes the GTP-dependent binding of aminoacyl-tRNA to the A-site of ribosomes during protein biosynthesis.</text>
</comment>
<comment type="catalytic activity">
    <reaction evidence="2">
        <text>GTP + H2O = GDP + phosphate + H(+)</text>
        <dbReference type="Rhea" id="RHEA:19669"/>
        <dbReference type="ChEBI" id="CHEBI:15377"/>
        <dbReference type="ChEBI" id="CHEBI:15378"/>
        <dbReference type="ChEBI" id="CHEBI:37565"/>
        <dbReference type="ChEBI" id="CHEBI:43474"/>
        <dbReference type="ChEBI" id="CHEBI:58189"/>
        <dbReference type="EC" id="3.6.5.3"/>
    </reaction>
    <physiologicalReaction direction="left-to-right" evidence="2">
        <dbReference type="Rhea" id="RHEA:19670"/>
    </physiologicalReaction>
</comment>
<comment type="subcellular location">
    <subcellularLocation>
        <location>Plastid</location>
        <location>Chloroplast</location>
    </subcellularLocation>
</comment>
<comment type="similarity">
    <text evidence="3">Belongs to the TRAFAC class translation factor GTPase superfamily. Classic translation factor GTPase family. EF-Tu/EF-1A subfamily.</text>
</comment>
<sequence length="408" mass="45321">MAQEVFQRTKPHVNIGTIGHVDHGKTTLTAAITMTLAVNSTCTPKKYDEIDAAPEERARGITINTAHVEYETALRHYAHVDCPGHADYIKNMITGAAQMDGAILVVSAADGPMPQTKEHILLAKQVGVPSIVVFLNKEDQVDDEEILQLVDLEVRESLINYEFPGDKVPVVSGSALMALQALTEKPNTSRGENKWVDKIYELMDAVDSYIPTPKRDIEKPFLMPIEDVFSIQGRGTVATGRIERGILKLGDIVELIGLNEKIRSTVVTGLEMFRRLLEQGFAGENIGVLLRGIEKKDIERGMVIAQPGTIEPHTRFEAQVYILRKEEGGRHSPFFAGYRPQFFVRTADVTGVIEAFEYDNGDKTRMVMPGDRVKMIVNLICPIAIEKKMRFAIREGGRTIGAGVVYKY</sequence>
<keyword id="KW-0150">Chloroplast</keyword>
<keyword id="KW-0251">Elongation factor</keyword>
<keyword id="KW-0342">GTP-binding</keyword>
<keyword id="KW-0378">Hydrolase</keyword>
<keyword id="KW-0460">Magnesium</keyword>
<keyword id="KW-0479">Metal-binding</keyword>
<keyword id="KW-0547">Nucleotide-binding</keyword>
<keyword id="KW-0934">Plastid</keyword>
<keyword id="KW-0648">Protein biosynthesis</keyword>
<protein>
    <recommendedName>
        <fullName>Elongation factor Tu, chloroplastic</fullName>
        <shortName>EF-Tu</shortName>
        <ecNumber evidence="2">3.6.5.3</ecNumber>
    </recommendedName>
</protein>
<accession>P50371</accession>
<gene>
    <name type="primary">tufA</name>
</gene>